<sequence length="347" mass="39137">TEGPDFYIPMVNTTGVVRSPYEYPQYYLVNPAAYAVLGAYMFFLIIVGFPINFLTLYVTLEHKKLRTPLNYILLNLAVADLFMVIGGFTTTMYSSMHGYFVLGRLGCNIEGFFATLGGMISLWSLAVLAIERWVVVCKPISNFRFGENHAIMGVSLTWVMALACTVPPLVGWSRYIPEGMQCACGIDYYTRAEGYNNESFVIYMFTFHFLFPMFIIFFCYGRLLCAVKEAAAAQQESETTQRAEREVTRMVILMVIGYLVCWLPYASVAWFIFTHKGSEFGPLFMAVPSFFAKSSSIYNPIIYICMNKQFRQCMITTLFCGKNPFEGQEEDSSTKTEASSASSVSPA</sequence>
<comment type="function">
    <text evidence="1 2 3">Photoreceptor required for image-forming vision at low light intensity. While most salt water fish species use retinal as chromophore, most freshwater fish use 3-dehydroretinal, or a mixture of retinal and 3-dehydroretinal (By similarity). Light-induced isomerization of 11-cis to all-trans retinal triggers a conformational change that activates signaling via G-proteins. Subsequent receptor phosphorylation mediates displacement of the bound G-protein alpha subunit by arrestin and terminates signaling (By similarity).</text>
</comment>
<comment type="subcellular location">
    <subcellularLocation>
        <location evidence="2">Membrane</location>
        <topology evidence="2">Multi-pass membrane protein</topology>
    </subcellularLocation>
    <subcellularLocation>
        <location evidence="4">Cell projection</location>
        <location evidence="4">Cilium</location>
        <location evidence="4">Photoreceptor outer segment</location>
    </subcellularLocation>
    <text evidence="2">Synthesized in the inner segment (IS) of rod photoreceptor cells before vectorial transport to disk membranes in the rod outer segment (OS) photosensory cilia.</text>
</comment>
<comment type="PTM">
    <text evidence="1">Phosphorylated on some or all of the serine and threonine residues present in the C-terminal region.</text>
</comment>
<comment type="PTM">
    <text evidence="1">Contains one covalently linked retinal chromophore.</text>
</comment>
<comment type="similarity">
    <text evidence="6">Belongs to the G-protein coupled receptor 1 family. Opsin subfamily.</text>
</comment>
<protein>
    <recommendedName>
        <fullName>Rhodopsin</fullName>
    </recommendedName>
</protein>
<feature type="chain" id="PRO_0000197715" description="Rhodopsin">
    <location>
        <begin position="1" status="less than"/>
        <end position="347"/>
    </location>
</feature>
<feature type="topological domain" description="Extracellular" evidence="8">
    <location>
        <begin position="1" status="less than"/>
        <end position="33"/>
    </location>
</feature>
<feature type="transmembrane region" description="Helical; Name=1" evidence="1">
    <location>
        <begin position="34"/>
        <end position="58"/>
    </location>
</feature>
<feature type="topological domain" description="Cytoplasmic" evidence="8">
    <location>
        <begin position="59"/>
        <end position="70"/>
    </location>
</feature>
<feature type="transmembrane region" description="Helical; Name=2" evidence="1">
    <location>
        <begin position="71"/>
        <end position="93"/>
    </location>
</feature>
<feature type="topological domain" description="Extracellular" evidence="8">
    <location>
        <begin position="94"/>
        <end position="107"/>
    </location>
</feature>
<feature type="transmembrane region" description="Helical; Name=3" evidence="1">
    <location>
        <begin position="108"/>
        <end position="130"/>
    </location>
</feature>
<feature type="topological domain" description="Cytoplasmic" evidence="8">
    <location>
        <begin position="131"/>
        <end position="149"/>
    </location>
</feature>
<feature type="transmembrane region" description="Helical; Name=4" evidence="1">
    <location>
        <begin position="150"/>
        <end position="170"/>
    </location>
</feature>
<feature type="topological domain" description="Extracellular" evidence="8">
    <location>
        <begin position="171"/>
        <end position="199"/>
    </location>
</feature>
<feature type="transmembrane region" description="Helical; Name=5" evidence="1">
    <location>
        <begin position="200"/>
        <end position="221"/>
    </location>
</feature>
<feature type="topological domain" description="Cytoplasmic" evidence="8">
    <location>
        <begin position="222"/>
        <end position="249"/>
    </location>
</feature>
<feature type="transmembrane region" description="Helical; Name=6" evidence="1">
    <location>
        <begin position="250"/>
        <end position="271"/>
    </location>
</feature>
<feature type="topological domain" description="Extracellular" evidence="8">
    <location>
        <begin position="272"/>
        <end position="283"/>
    </location>
</feature>
<feature type="transmembrane region" description="Helical; Name=7" evidence="1">
    <location>
        <begin position="284"/>
        <end position="305"/>
    </location>
</feature>
<feature type="topological domain" description="Cytoplasmic" evidence="8">
    <location>
        <begin position="306"/>
        <end position="347"/>
    </location>
</feature>
<feature type="region of interest" description="Disordered" evidence="7">
    <location>
        <begin position="326"/>
        <end position="347"/>
    </location>
</feature>
<feature type="short sequence motif" description="'Ionic lock' involved in activated form stabilization" evidence="1">
    <location>
        <begin position="131"/>
        <end position="133"/>
    </location>
</feature>
<feature type="compositionally biased region" description="Low complexity" evidence="7">
    <location>
        <begin position="335"/>
        <end position="347"/>
    </location>
</feature>
<feature type="site" description="Plays an important role in the conformation switch to the active conformation" evidence="1">
    <location>
        <position position="110"/>
    </location>
</feature>
<feature type="modified residue" description="N6-(retinylidene)lysine" evidence="1">
    <location>
        <position position="293"/>
    </location>
</feature>
<feature type="lipid moiety-binding region" description="S-palmitoyl cysteine" evidence="1">
    <location>
        <position position="320"/>
    </location>
</feature>
<feature type="glycosylation site" description="N-linked (GlcNAc...) asparagine" evidence="5">
    <location>
        <position position="12"/>
    </location>
</feature>
<feature type="glycosylation site" description="N-linked (GlcNAc...) asparagine" evidence="5">
    <location>
        <position position="197"/>
    </location>
</feature>
<feature type="disulfide bond" evidence="6">
    <location>
        <begin position="107"/>
        <end position="184"/>
    </location>
</feature>
<feature type="non-terminal residue">
    <location>
        <position position="1"/>
    </location>
</feature>
<reference key="1">
    <citation type="submission" date="1997-01" db="EMBL/GenBank/DDBJ databases">
        <title>Molecular phylogeny of 11 holocentrid fishes (Order Beryciformes) inferred from rhodopsin cDNA and cytochrome b.</title>
        <authorList>
            <person name="Toller W.W."/>
            <person name="Moses K."/>
            <person name="McFall-Ngai M.J."/>
        </authorList>
    </citation>
    <scope>NUCLEOTIDE SEQUENCE [MRNA]</scope>
    <source>
        <tissue>Eye</tissue>
    </source>
</reference>
<keyword id="KW-0966">Cell projection</keyword>
<keyword id="KW-0157">Chromophore</keyword>
<keyword id="KW-1015">Disulfide bond</keyword>
<keyword id="KW-0297">G-protein coupled receptor</keyword>
<keyword id="KW-0325">Glycoprotein</keyword>
<keyword id="KW-0449">Lipoprotein</keyword>
<keyword id="KW-0472">Membrane</keyword>
<keyword id="KW-0564">Palmitate</keyword>
<keyword id="KW-0597">Phosphoprotein</keyword>
<keyword id="KW-0600">Photoreceptor protein</keyword>
<keyword id="KW-0675">Receptor</keyword>
<keyword id="KW-0681">Retinal protein</keyword>
<keyword id="KW-0716">Sensory transduction</keyword>
<keyword id="KW-0807">Transducer</keyword>
<keyword id="KW-0812">Transmembrane</keyword>
<keyword id="KW-1133">Transmembrane helix</keyword>
<keyword id="KW-0844">Vision</keyword>
<accession>P79903</accession>
<evidence type="ECO:0000250" key="1">
    <source>
        <dbReference type="UniProtKB" id="P02699"/>
    </source>
</evidence>
<evidence type="ECO:0000250" key="2">
    <source>
        <dbReference type="UniProtKB" id="P08100"/>
    </source>
</evidence>
<evidence type="ECO:0000250" key="3">
    <source>
        <dbReference type="UniProtKB" id="P32309"/>
    </source>
</evidence>
<evidence type="ECO:0000250" key="4">
    <source>
        <dbReference type="UniProtKB" id="P35359"/>
    </source>
</evidence>
<evidence type="ECO:0000255" key="5"/>
<evidence type="ECO:0000255" key="6">
    <source>
        <dbReference type="PROSITE-ProRule" id="PRU00521"/>
    </source>
</evidence>
<evidence type="ECO:0000256" key="7">
    <source>
        <dbReference type="SAM" id="MobiDB-lite"/>
    </source>
</evidence>
<evidence type="ECO:0000305" key="8"/>
<proteinExistence type="evidence at transcript level"/>
<dbReference type="EMBL" id="U57544">
    <property type="protein sequence ID" value="AAB39532.1"/>
    <property type="molecule type" value="mRNA"/>
</dbReference>
<dbReference type="SMR" id="P79903"/>
<dbReference type="GlyCosmos" id="P79903">
    <property type="glycosylation" value="2 sites, No reported glycans"/>
</dbReference>
<dbReference type="GO" id="GO:0016020">
    <property type="term" value="C:membrane"/>
    <property type="evidence" value="ECO:0000250"/>
    <property type="project" value="UniProtKB"/>
</dbReference>
<dbReference type="GO" id="GO:0097381">
    <property type="term" value="C:photoreceptor disc membrane"/>
    <property type="evidence" value="ECO:0000250"/>
    <property type="project" value="UniProtKB"/>
</dbReference>
<dbReference type="GO" id="GO:0005886">
    <property type="term" value="C:plasma membrane"/>
    <property type="evidence" value="ECO:0000250"/>
    <property type="project" value="UniProtKB"/>
</dbReference>
<dbReference type="GO" id="GO:0005502">
    <property type="term" value="F:11-cis retinal binding"/>
    <property type="evidence" value="ECO:0000250"/>
    <property type="project" value="UniProtKB"/>
</dbReference>
<dbReference type="GO" id="GO:0008020">
    <property type="term" value="F:G protein-coupled photoreceptor activity"/>
    <property type="evidence" value="ECO:0000250"/>
    <property type="project" value="UniProtKB"/>
</dbReference>
<dbReference type="GO" id="GO:0016038">
    <property type="term" value="P:absorption of visible light"/>
    <property type="evidence" value="ECO:0000250"/>
    <property type="project" value="UniProtKB"/>
</dbReference>
<dbReference type="GO" id="GO:0016056">
    <property type="term" value="P:G protein-coupled opsin signaling pathway"/>
    <property type="evidence" value="ECO:0000250"/>
    <property type="project" value="UniProtKB"/>
</dbReference>
<dbReference type="GO" id="GO:0007601">
    <property type="term" value="P:visual perception"/>
    <property type="evidence" value="ECO:0007669"/>
    <property type="project" value="UniProtKB-KW"/>
</dbReference>
<dbReference type="CDD" id="cd15080">
    <property type="entry name" value="7tmA_MWS_opsin"/>
    <property type="match status" value="1"/>
</dbReference>
<dbReference type="FunFam" id="1.20.1070.10:FF:000018">
    <property type="entry name" value="Rhodopsin"/>
    <property type="match status" value="1"/>
</dbReference>
<dbReference type="Gene3D" id="1.20.1070.10">
    <property type="entry name" value="Rhodopsin 7-helix transmembrane proteins"/>
    <property type="match status" value="1"/>
</dbReference>
<dbReference type="InterPro" id="IPR050125">
    <property type="entry name" value="GPCR_opsins"/>
</dbReference>
<dbReference type="InterPro" id="IPR000276">
    <property type="entry name" value="GPCR_Rhodpsn"/>
</dbReference>
<dbReference type="InterPro" id="IPR017452">
    <property type="entry name" value="GPCR_Rhodpsn_7TM"/>
</dbReference>
<dbReference type="InterPro" id="IPR001760">
    <property type="entry name" value="Opsin"/>
</dbReference>
<dbReference type="InterPro" id="IPR027430">
    <property type="entry name" value="Retinal_BS"/>
</dbReference>
<dbReference type="InterPro" id="IPR000732">
    <property type="entry name" value="Rhodopsin"/>
</dbReference>
<dbReference type="InterPro" id="IPR019477">
    <property type="entry name" value="Rhodopsin_N"/>
</dbReference>
<dbReference type="PANTHER" id="PTHR24240">
    <property type="entry name" value="OPSIN"/>
    <property type="match status" value="1"/>
</dbReference>
<dbReference type="Pfam" id="PF00001">
    <property type="entry name" value="7tm_1"/>
    <property type="match status" value="1"/>
</dbReference>
<dbReference type="Pfam" id="PF10413">
    <property type="entry name" value="Rhodopsin_N"/>
    <property type="match status" value="1"/>
</dbReference>
<dbReference type="PRINTS" id="PR00237">
    <property type="entry name" value="GPCRRHODOPSN"/>
</dbReference>
<dbReference type="PRINTS" id="PR00238">
    <property type="entry name" value="OPSIN"/>
</dbReference>
<dbReference type="PRINTS" id="PR00579">
    <property type="entry name" value="RHODOPSIN"/>
</dbReference>
<dbReference type="SUPFAM" id="SSF81321">
    <property type="entry name" value="Family A G protein-coupled receptor-like"/>
    <property type="match status" value="1"/>
</dbReference>
<dbReference type="PROSITE" id="PS00237">
    <property type="entry name" value="G_PROTEIN_RECEP_F1_1"/>
    <property type="match status" value="1"/>
</dbReference>
<dbReference type="PROSITE" id="PS50262">
    <property type="entry name" value="G_PROTEIN_RECEP_F1_2"/>
    <property type="match status" value="1"/>
</dbReference>
<dbReference type="PROSITE" id="PS00238">
    <property type="entry name" value="OPSIN"/>
    <property type="match status" value="1"/>
</dbReference>
<organism>
    <name type="scientific">Sargocentron spiniferum</name>
    <name type="common">Sabre squirrelfish</name>
    <name type="synonym">Adioryx spinifer</name>
    <dbReference type="NCBI Taxonomy" id="47712"/>
    <lineage>
        <taxon>Eukaryota</taxon>
        <taxon>Metazoa</taxon>
        <taxon>Chordata</taxon>
        <taxon>Craniata</taxon>
        <taxon>Vertebrata</taxon>
        <taxon>Euteleostomi</taxon>
        <taxon>Actinopterygii</taxon>
        <taxon>Neopterygii</taxon>
        <taxon>Teleostei</taxon>
        <taxon>Neoteleostei</taxon>
        <taxon>Acanthomorphata</taxon>
        <taxon>Holocentriformes</taxon>
        <taxon>Holocentridae</taxon>
        <taxon>Sargocentron</taxon>
    </lineage>
</organism>
<name>OPSD_SARSP</name>
<gene>
    <name type="primary">rho</name>
</gene>